<organism>
    <name type="scientific">Dictyostelium discoideum</name>
    <name type="common">Social amoeba</name>
    <dbReference type="NCBI Taxonomy" id="44689"/>
    <lineage>
        <taxon>Eukaryota</taxon>
        <taxon>Amoebozoa</taxon>
        <taxon>Evosea</taxon>
        <taxon>Eumycetozoa</taxon>
        <taxon>Dictyostelia</taxon>
        <taxon>Dictyosteliales</taxon>
        <taxon>Dictyosteliaceae</taxon>
        <taxon>Dictyostelium</taxon>
    </lineage>
</organism>
<feature type="chain" id="PRO_0000088823" description="Phosphatidylinositol 3-kinase 2">
    <location>
        <begin position="1"/>
        <end position="1857"/>
    </location>
</feature>
<feature type="domain" description="PI3K-RBD" evidence="3">
    <location>
        <begin position="821"/>
        <end position="934"/>
    </location>
</feature>
<feature type="domain" description="C2 PI3K-type" evidence="4">
    <location>
        <begin position="1099"/>
        <end position="1271"/>
    </location>
</feature>
<feature type="domain" description="PIK helical" evidence="2">
    <location>
        <begin position="1326"/>
        <end position="1503"/>
    </location>
</feature>
<feature type="domain" description="PI3K/PI4K catalytic" evidence="1">
    <location>
        <begin position="1568"/>
        <end position="1845"/>
    </location>
</feature>
<feature type="region of interest" description="Disordered" evidence="5">
    <location>
        <begin position="1"/>
        <end position="61"/>
    </location>
</feature>
<feature type="region of interest" description="Disordered" evidence="5">
    <location>
        <begin position="145"/>
        <end position="313"/>
    </location>
</feature>
<feature type="region of interest" description="Disordered" evidence="5">
    <location>
        <begin position="348"/>
        <end position="468"/>
    </location>
</feature>
<feature type="region of interest" description="Disordered" evidence="5">
    <location>
        <begin position="481"/>
        <end position="512"/>
    </location>
</feature>
<feature type="region of interest" description="Disordered" evidence="5">
    <location>
        <begin position="530"/>
        <end position="573"/>
    </location>
</feature>
<feature type="region of interest" description="Disordered" evidence="5">
    <location>
        <begin position="996"/>
        <end position="1078"/>
    </location>
</feature>
<feature type="region of interest" description="G-loop" evidence="1">
    <location>
        <begin position="1574"/>
        <end position="1580"/>
    </location>
</feature>
<feature type="region of interest" description="Catalytic loop" evidence="1">
    <location>
        <begin position="1711"/>
        <end position="1719"/>
    </location>
</feature>
<feature type="region of interest" description="Activation loop" evidence="1">
    <location>
        <begin position="1730"/>
        <end position="1756"/>
    </location>
</feature>
<feature type="compositionally biased region" description="Low complexity" evidence="5">
    <location>
        <begin position="1"/>
        <end position="32"/>
    </location>
</feature>
<feature type="compositionally biased region" description="Low complexity" evidence="5">
    <location>
        <begin position="42"/>
        <end position="55"/>
    </location>
</feature>
<feature type="compositionally biased region" description="Polar residues" evidence="5">
    <location>
        <begin position="145"/>
        <end position="155"/>
    </location>
</feature>
<feature type="compositionally biased region" description="Low complexity" evidence="5">
    <location>
        <begin position="162"/>
        <end position="269"/>
    </location>
</feature>
<feature type="compositionally biased region" description="Polar residues" evidence="5">
    <location>
        <begin position="270"/>
        <end position="281"/>
    </location>
</feature>
<feature type="compositionally biased region" description="Low complexity" evidence="5">
    <location>
        <begin position="288"/>
        <end position="311"/>
    </location>
</feature>
<feature type="compositionally biased region" description="Low complexity" evidence="5">
    <location>
        <begin position="352"/>
        <end position="464"/>
    </location>
</feature>
<feature type="compositionally biased region" description="Low complexity" evidence="5">
    <location>
        <begin position="533"/>
        <end position="560"/>
    </location>
</feature>
<feature type="compositionally biased region" description="Gly residues" evidence="5">
    <location>
        <begin position="561"/>
        <end position="570"/>
    </location>
</feature>
<feature type="compositionally biased region" description="Basic and acidic residues" evidence="5">
    <location>
        <begin position="997"/>
        <end position="1011"/>
    </location>
</feature>
<feature type="compositionally biased region" description="Low complexity" evidence="5">
    <location>
        <begin position="1012"/>
        <end position="1056"/>
    </location>
</feature>
<feature type="sequence conflict" description="In Ref. 1; AAA85722." evidence="6" ref="1">
    <original>S</original>
    <variation>P</variation>
    <location>
        <position position="14"/>
    </location>
</feature>
<feature type="sequence conflict" description="In Ref. 1; AAA85722." evidence="6" ref="1">
    <original>S</original>
    <variation>C</variation>
    <location>
        <position position="50"/>
    </location>
</feature>
<feature type="sequence conflict" description="In Ref. 1; AAA85722." evidence="6" ref="1">
    <original>D</original>
    <variation>V</variation>
    <location>
        <position position="497"/>
    </location>
</feature>
<feature type="sequence conflict" description="In Ref. 1; AAA85722." evidence="6" ref="1">
    <original>S</original>
    <variation>SN</variation>
    <location>
        <position position="1014"/>
    </location>
</feature>
<keyword id="KW-0067">ATP-binding</keyword>
<keyword id="KW-0418">Kinase</keyword>
<keyword id="KW-0547">Nucleotide-binding</keyword>
<keyword id="KW-1185">Reference proteome</keyword>
<keyword id="KW-0808">Transferase</keyword>
<gene>
    <name type="primary">pikB</name>
    <name type="synonym">pik2</name>
    <name type="ORF">DDB_G0283081</name>
</gene>
<accession>P54674</accession>
<accession>Q54RJ8</accession>
<comment type="catalytic activity">
    <reaction>
        <text>a 1,2-diacyl-sn-glycero-3-phospho-(1D-myo-inositol) + ATP = a 1,2-diacyl-sn-glycero-3-phospho-(1D-myo-inositol-3-phosphate) + ADP + H(+)</text>
        <dbReference type="Rhea" id="RHEA:12709"/>
        <dbReference type="ChEBI" id="CHEBI:15378"/>
        <dbReference type="ChEBI" id="CHEBI:30616"/>
        <dbReference type="ChEBI" id="CHEBI:57880"/>
        <dbReference type="ChEBI" id="CHEBI:58088"/>
        <dbReference type="ChEBI" id="CHEBI:456216"/>
        <dbReference type="EC" id="2.7.1.137"/>
    </reaction>
</comment>
<comment type="similarity">
    <text evidence="3 4">Belongs to the PI3/PI4-kinase family.</text>
</comment>
<name>PI3K2_DICDI</name>
<evidence type="ECO:0000255" key="1">
    <source>
        <dbReference type="PROSITE-ProRule" id="PRU00269"/>
    </source>
</evidence>
<evidence type="ECO:0000255" key="2">
    <source>
        <dbReference type="PROSITE-ProRule" id="PRU00878"/>
    </source>
</evidence>
<evidence type="ECO:0000255" key="3">
    <source>
        <dbReference type="PROSITE-ProRule" id="PRU00879"/>
    </source>
</evidence>
<evidence type="ECO:0000255" key="4">
    <source>
        <dbReference type="PROSITE-ProRule" id="PRU00880"/>
    </source>
</evidence>
<evidence type="ECO:0000256" key="5">
    <source>
        <dbReference type="SAM" id="MobiDB-lite"/>
    </source>
</evidence>
<evidence type="ECO:0000305" key="6"/>
<protein>
    <recommendedName>
        <fullName>Phosphatidylinositol 3-kinase 2</fullName>
        <shortName>PI3-kinase</shortName>
        <shortName>PI3K</shortName>
        <shortName>PtdIns-3-kinase</shortName>
        <ecNumber>2.7.1.137</ecNumber>
    </recommendedName>
</protein>
<sequence>MKMSEGIISPLSLSSESSEQQQAAIRKFSNGSNGSGGGGGSNLSVNSSNSGSNNSIRKSSTLMYNGPLPSINDGKELLLENSKPKVVELVNTFNHKPLSTIHSVHNEIPPPAIEKEKKEIINTISNSGVTKYMTALEILDSTINTPLNRSRSGSIGSKPICNNLTSSSSSSSTTATTPSPTTTSNNNNNNNNNNNNNNNNNNNNNNNNNNNNNNNNNNNNNNNNNNTTSTTTTTTSILISSSPPPSSSSSSSSNDEQFNNNNNNNNSNSGGSSRMITSKSQIKPLIVTSNTAATTTTTTTTNTSAPTTPTNRVQSSLDDLLFNLPTIPSNVPTVNGGPKISAVPKKVSSSKLLIPPSSNVSSSSNITLSLSSSSPSSSSSSSTSTVVPIVQLSSSNSTNSPSTSLPTTPRLSQPTTSYTQLIPSQQQQQPTESNSSSNTNTTTTSSSSSSSSSSLTISSPQPSNNSIRISAFGRSSTQFTISSNGIPSSPGQVSNKDYNNIGNLSNSSGERVKNKQYSMLNISKKTILDESDISSSPRSIGSPNSIRASISSQLPPSLSSIGGGGGGGSGPNVVSNKPLVVKKPSTSEHIKKENIWRQTMIPLTKEDHIKVVFEGIPGKRVIQKFLIDKTPIEIKSKFFEDLKDGDLLNGLTQLPSLIPEHYELKVLSVNSTISNETLPLRRQTLMQACNISRLFPKLHLILKSESTTILDGASTTTTTTTTTTTTTANQSSNIITKSNSSLDLTINNSNEIIDVKGHIQAELEIFELIGTSFTRVLDQGQEVVSFRRDFAQFRLSNFTSTRNDLSQMIYVSSEPLPLTIPNKITIMVLLPGDGKIIKRVDCCPNSSVGDVKKEIFKKFAMIDRVHTQGKTQDDFVLKVTGFREYILCIHELGNLTSRQRFYPTGSGGDFSLMDYDYIRQCVGKNQTVELSLTNNSILSLNQVSEKVSFIDKILETSDFDDYDEDLDSINSNSFDDLKQSIQQQQQQQIQTVINIKETNKENKDSNKENKDSSSNNNNNNNNNNNNNNNNNNNNNNNNNNNGNNNGNNSNNNSNSNISRGSIDSEGNGSGSGNGSEQPTLIGVQNFSLPNNSKLPINIVKRLFRVNIAGLRNLNFNNNEDARNKFADGKNNQPNVFVMAELYYGGELLTNPVFTPIAQLASYGDGSVEFPNWEKGIAFTIPIRYLPRAARASFTVYVTTISEALESQMDEVVSKSIPIGWSNCLLMNHKGMLRMGPTAFRLWDDGRRANPIGTCVDNQAAKQPIILLVEFESFIRPIVYVDTALQSMMVNDSSSISSNGVESPSIVSFSSSAASSSPLPSSPLPSPVGLKKLDLDEARRLKALMDSDPLVQLSAEDKKLVYGYRHIYKSKPKALAKFLLSVNWIDPDQVTDAYRQMNDWALLKPVQALEILDAKFADEHVRNFAIKIINSFSDAEFSDFLLQLTQVLKYEPYHNSDLTHILIQRALSNRSRIGHFFFWFLKSEMHTPEIEERYGLLLEGYLRSCGTHRQDLIKQNQVLKSLHTVAMAVKQTNGSSERKKVLMEGLSKIKFPDTFQLPLDPRWEAKGLIIDKCRYMDSKKLPLWLVFENVEPHAKPLTVIFKVGDDLRQDILTLQVLRIMDKFWKNSGMDLRLQPYKCIATGDGIGMLEVVLNANTIANINKDAGGTGALLEEKTLVNWLKECNKTEAEYNKAVETFILSCAGYVVATYVMGIGDRHSDNIMITKLGHLFHIDFGHFLGNYKKKYGFKRERAPFIFTPQYMAIVGGKDSENFKRFVTTCCSAYNILRKNTDLFINLFQLMLSTGIPELQVAEDIDYLRKALAPGLSDEEAAEEFTKNISVALNTKTVLLNDIFHGWAH</sequence>
<proteinExistence type="evidence at transcript level"/>
<dbReference type="EC" id="2.7.1.137"/>
<dbReference type="EMBL" id="U23477">
    <property type="protein sequence ID" value="AAA85722.1"/>
    <property type="molecule type" value="mRNA"/>
</dbReference>
<dbReference type="EMBL" id="AAFI02000050">
    <property type="protein sequence ID" value="EAL65869.1"/>
    <property type="molecule type" value="Genomic_DNA"/>
</dbReference>
<dbReference type="PIR" id="T18273">
    <property type="entry name" value="T18273"/>
</dbReference>
<dbReference type="RefSeq" id="XP_639238.1">
    <property type="nucleotide sequence ID" value="XM_634146.1"/>
</dbReference>
<dbReference type="SMR" id="P54674"/>
<dbReference type="FunCoup" id="P54674">
    <property type="interactions" value="50"/>
</dbReference>
<dbReference type="STRING" id="44689.P54674"/>
<dbReference type="PaxDb" id="44689-DDB0191474"/>
<dbReference type="EnsemblProtists" id="EAL65869">
    <property type="protein sequence ID" value="EAL65869"/>
    <property type="gene ID" value="DDB_G0283081"/>
</dbReference>
<dbReference type="GeneID" id="8623924"/>
<dbReference type="KEGG" id="ddi:DDB_G0283081"/>
<dbReference type="dictyBase" id="DDB_G0283081">
    <property type="gene designation" value="pikB"/>
</dbReference>
<dbReference type="VEuPathDB" id="AmoebaDB:DDB_G0283081"/>
<dbReference type="eggNOG" id="KOG0904">
    <property type="taxonomic scope" value="Eukaryota"/>
</dbReference>
<dbReference type="HOGENOM" id="CLU_236743_0_0_1"/>
<dbReference type="InParanoid" id="P54674"/>
<dbReference type="OMA" id="LMQACNI"/>
<dbReference type="BRENDA" id="2.7.1.137">
    <property type="organism ID" value="1939"/>
</dbReference>
<dbReference type="Reactome" id="R-DDI-114604">
    <property type="pathway name" value="GPVI-mediated activation cascade"/>
</dbReference>
<dbReference type="Reactome" id="R-DDI-1660499">
    <property type="pathway name" value="Synthesis of PIPs at the plasma membrane"/>
</dbReference>
<dbReference type="Reactome" id="R-DDI-1660514">
    <property type="pathway name" value="Synthesis of PIPs at the Golgi membrane"/>
</dbReference>
<dbReference type="Reactome" id="R-DDI-1660516">
    <property type="pathway name" value="Synthesis of PIPs at the early endosome membrane"/>
</dbReference>
<dbReference type="Reactome" id="R-DDI-1660517">
    <property type="pathway name" value="Synthesis of PIPs at the late endosome membrane"/>
</dbReference>
<dbReference type="Reactome" id="R-DDI-392451">
    <property type="pathway name" value="G beta:gamma signalling through PI3Kgamma"/>
</dbReference>
<dbReference type="Reactome" id="R-DDI-8856828">
    <property type="pathway name" value="Clathrin-mediated endocytosis"/>
</dbReference>
<dbReference type="PRO" id="PR:P54674"/>
<dbReference type="Proteomes" id="UP000002195">
    <property type="component" value="Chromosome 4"/>
</dbReference>
<dbReference type="GO" id="GO:0005938">
    <property type="term" value="C:cell cortex"/>
    <property type="evidence" value="ECO:0000314"/>
    <property type="project" value="dictyBase"/>
</dbReference>
<dbReference type="GO" id="GO:0031252">
    <property type="term" value="C:cell leading edge"/>
    <property type="evidence" value="ECO:0000314"/>
    <property type="project" value="dictyBase"/>
</dbReference>
<dbReference type="GO" id="GO:0005737">
    <property type="term" value="C:cytoplasm"/>
    <property type="evidence" value="ECO:0000318"/>
    <property type="project" value="GO_Central"/>
</dbReference>
<dbReference type="GO" id="GO:0005829">
    <property type="term" value="C:cytosol"/>
    <property type="evidence" value="ECO:0000304"/>
    <property type="project" value="dictyBase"/>
</dbReference>
<dbReference type="GO" id="GO:0044354">
    <property type="term" value="C:macropinosome"/>
    <property type="evidence" value="ECO:0000314"/>
    <property type="project" value="dictyBase"/>
</dbReference>
<dbReference type="GO" id="GO:0016020">
    <property type="term" value="C:membrane"/>
    <property type="evidence" value="ECO:0000304"/>
    <property type="project" value="dictyBase"/>
</dbReference>
<dbReference type="GO" id="GO:0005886">
    <property type="term" value="C:plasma membrane"/>
    <property type="evidence" value="ECO:0000314"/>
    <property type="project" value="dictyBase"/>
</dbReference>
<dbReference type="GO" id="GO:0031143">
    <property type="term" value="C:pseudopodium"/>
    <property type="evidence" value="ECO:0000314"/>
    <property type="project" value="dictyBase"/>
</dbReference>
<dbReference type="GO" id="GO:0016303">
    <property type="term" value="F:1-phosphatidylinositol-3-kinase activity"/>
    <property type="evidence" value="ECO:0000318"/>
    <property type="project" value="GO_Central"/>
</dbReference>
<dbReference type="GO" id="GO:0046934">
    <property type="term" value="F:1-phosphatidylinositol-4,5-bisphosphate 3-kinase activity"/>
    <property type="evidence" value="ECO:0000314"/>
    <property type="project" value="dictyBase"/>
</dbReference>
<dbReference type="GO" id="GO:0035005">
    <property type="term" value="F:1-phosphatidylinositol-4-phosphate 3-kinase activity"/>
    <property type="evidence" value="ECO:0000318"/>
    <property type="project" value="GO_Central"/>
</dbReference>
<dbReference type="GO" id="GO:0010856">
    <property type="term" value="F:adenylate cyclase activator activity"/>
    <property type="evidence" value="ECO:0000314"/>
    <property type="project" value="dictyBase"/>
</dbReference>
<dbReference type="GO" id="GO:0010855">
    <property type="term" value="F:adenylate cyclase inhibitor activity"/>
    <property type="evidence" value="ECO:0000314"/>
    <property type="project" value="dictyBase"/>
</dbReference>
<dbReference type="GO" id="GO:0005524">
    <property type="term" value="F:ATP binding"/>
    <property type="evidence" value="ECO:0007669"/>
    <property type="project" value="UniProtKB-KW"/>
</dbReference>
<dbReference type="GO" id="GO:0030295">
    <property type="term" value="F:protein kinase activator activity"/>
    <property type="evidence" value="ECO:0000316"/>
    <property type="project" value="dictyBase"/>
</dbReference>
<dbReference type="GO" id="GO:0031267">
    <property type="term" value="F:small GTPase binding"/>
    <property type="evidence" value="ECO:0000353"/>
    <property type="project" value="dictyBase"/>
</dbReference>
<dbReference type="GO" id="GO:0030036">
    <property type="term" value="P:actin cytoskeleton organization"/>
    <property type="evidence" value="ECO:0000316"/>
    <property type="project" value="dictyBase"/>
</dbReference>
<dbReference type="GO" id="GO:0019954">
    <property type="term" value="P:asexual reproduction"/>
    <property type="evidence" value="ECO:0000315"/>
    <property type="project" value="dictyBase"/>
</dbReference>
<dbReference type="GO" id="GO:0032060">
    <property type="term" value="P:bleb assembly"/>
    <property type="evidence" value="ECO:0000316"/>
    <property type="project" value="dictyBase"/>
</dbReference>
<dbReference type="GO" id="GO:0016477">
    <property type="term" value="P:cell migration"/>
    <property type="evidence" value="ECO:0000318"/>
    <property type="project" value="GO_Central"/>
</dbReference>
<dbReference type="GO" id="GO:0048870">
    <property type="term" value="P:cell motility"/>
    <property type="evidence" value="ECO:0000316"/>
    <property type="project" value="dictyBase"/>
</dbReference>
<dbReference type="GO" id="GO:0006935">
    <property type="term" value="P:chemotaxis"/>
    <property type="evidence" value="ECO:0000315"/>
    <property type="project" value="dictyBase"/>
</dbReference>
<dbReference type="GO" id="GO:0043327">
    <property type="term" value="P:chemotaxis to cAMP"/>
    <property type="evidence" value="ECO:0000316"/>
    <property type="project" value="dictyBase"/>
</dbReference>
<dbReference type="GO" id="GO:0007186">
    <property type="term" value="P:G protein-coupled receptor signaling pathway"/>
    <property type="evidence" value="ECO:0000315"/>
    <property type="project" value="dictyBase"/>
</dbReference>
<dbReference type="GO" id="GO:0044351">
    <property type="term" value="P:macropinocytosis"/>
    <property type="evidence" value="ECO:0000315"/>
    <property type="project" value="dictyBase"/>
</dbReference>
<dbReference type="GO" id="GO:0030011">
    <property type="term" value="P:maintenance of cell polarity"/>
    <property type="evidence" value="ECO:0000316"/>
    <property type="project" value="dictyBase"/>
</dbReference>
<dbReference type="GO" id="GO:0050919">
    <property type="term" value="P:negative chemotaxis"/>
    <property type="evidence" value="ECO:0000316"/>
    <property type="project" value="dictyBase"/>
</dbReference>
<dbReference type="GO" id="GO:0001845">
    <property type="term" value="P:phagolysosome assembly"/>
    <property type="evidence" value="ECO:0000316"/>
    <property type="project" value="dictyBase"/>
</dbReference>
<dbReference type="GO" id="GO:0090382">
    <property type="term" value="P:phagosome maturation"/>
    <property type="evidence" value="ECO:0000316"/>
    <property type="project" value="dictyBase"/>
</dbReference>
<dbReference type="GO" id="GO:0043491">
    <property type="term" value="P:phosphatidylinositol 3-kinase/protein kinase B signal transduction"/>
    <property type="evidence" value="ECO:0000316"/>
    <property type="project" value="dictyBase"/>
</dbReference>
<dbReference type="GO" id="GO:0006661">
    <property type="term" value="P:phosphatidylinositol biosynthetic process"/>
    <property type="evidence" value="ECO:0000316"/>
    <property type="project" value="dictyBase"/>
</dbReference>
<dbReference type="GO" id="GO:0036092">
    <property type="term" value="P:phosphatidylinositol-3-phosphate biosynthetic process"/>
    <property type="evidence" value="ECO:0000318"/>
    <property type="project" value="GO_Central"/>
</dbReference>
<dbReference type="GO" id="GO:0048015">
    <property type="term" value="P:phosphatidylinositol-mediated signaling"/>
    <property type="evidence" value="ECO:0000318"/>
    <property type="project" value="GO_Central"/>
</dbReference>
<dbReference type="GO" id="GO:1905303">
    <property type="term" value="P:positive regulation of macropinocytosis"/>
    <property type="evidence" value="ECO:0000316"/>
    <property type="project" value="dictyBase"/>
</dbReference>
<dbReference type="GO" id="GO:0051897">
    <property type="term" value="P:positive regulation of phosphatidylinositol 3-kinase/protein kinase B signal transduction"/>
    <property type="evidence" value="ECO:0000316"/>
    <property type="project" value="dictyBase"/>
</dbReference>
<dbReference type="GO" id="GO:0031269">
    <property type="term" value="P:pseudopodium assembly"/>
    <property type="evidence" value="ECO:0000316"/>
    <property type="project" value="dictyBase"/>
</dbReference>
<dbReference type="GO" id="GO:0022604">
    <property type="term" value="P:regulation of cell morphogenesis"/>
    <property type="evidence" value="ECO:0000316"/>
    <property type="project" value="dictyBase"/>
</dbReference>
<dbReference type="GO" id="GO:0050920">
    <property type="term" value="P:regulation of chemotaxis"/>
    <property type="evidence" value="ECO:0000316"/>
    <property type="project" value="dictyBase"/>
</dbReference>
<dbReference type="GO" id="GO:1900027">
    <property type="term" value="P:regulation of ruffle assembly"/>
    <property type="evidence" value="ECO:0000315"/>
    <property type="project" value="dictyBase"/>
</dbReference>
<dbReference type="GO" id="GO:0009617">
    <property type="term" value="P:response to bacterium"/>
    <property type="evidence" value="ECO:0000315"/>
    <property type="project" value="dictyBase"/>
</dbReference>
<dbReference type="GO" id="GO:0051591">
    <property type="term" value="P:response to cAMP"/>
    <property type="evidence" value="ECO:0000316"/>
    <property type="project" value="dictyBase"/>
</dbReference>
<dbReference type="GO" id="GO:0051602">
    <property type="term" value="P:response to electrical stimulus"/>
    <property type="evidence" value="ECO:0000315"/>
    <property type="project" value="dictyBase"/>
</dbReference>
<dbReference type="CDD" id="cd08380">
    <property type="entry name" value="C2_PI3K_like"/>
    <property type="match status" value="1"/>
</dbReference>
<dbReference type="CDD" id="cd00872">
    <property type="entry name" value="PI3Ka_I"/>
    <property type="match status" value="1"/>
</dbReference>
<dbReference type="CDD" id="cd00891">
    <property type="entry name" value="PI3Kc"/>
    <property type="match status" value="1"/>
</dbReference>
<dbReference type="FunFam" id="2.60.40.150:FF:000210">
    <property type="entry name" value="Phosphatidylinositol 3-kinase catalytic subunit gamma, putative"/>
    <property type="match status" value="1"/>
</dbReference>
<dbReference type="FunFam" id="1.10.1070.11:FF:000001">
    <property type="entry name" value="Phosphatidylinositol 4,5-bisphosphate 3-kinase catalytic subunit"/>
    <property type="match status" value="1"/>
</dbReference>
<dbReference type="FunFam" id="3.30.1010.10:FF:000008">
    <property type="entry name" value="Phosphatidylinositol 4,5-bisphosphate 3-kinase catalytic subunit gamma"/>
    <property type="match status" value="1"/>
</dbReference>
<dbReference type="Gene3D" id="2.60.40.150">
    <property type="entry name" value="C2 domain"/>
    <property type="match status" value="1"/>
</dbReference>
<dbReference type="Gene3D" id="1.10.1070.11">
    <property type="entry name" value="Phosphatidylinositol 3-/4-kinase, catalytic domain"/>
    <property type="match status" value="1"/>
</dbReference>
<dbReference type="Gene3D" id="3.10.20.90">
    <property type="entry name" value="Phosphatidylinositol 3-kinase Catalytic Subunit, Chain A, domain 1"/>
    <property type="match status" value="1"/>
</dbReference>
<dbReference type="Gene3D" id="3.30.1010.10">
    <property type="entry name" value="Phosphatidylinositol 3-kinase Catalytic Subunit, Chain A, domain 4"/>
    <property type="match status" value="1"/>
</dbReference>
<dbReference type="Gene3D" id="1.25.40.70">
    <property type="entry name" value="Phosphatidylinositol 3-kinase, accessory domain (PIK)"/>
    <property type="match status" value="1"/>
</dbReference>
<dbReference type="InterPro" id="IPR016024">
    <property type="entry name" value="ARM-type_fold"/>
</dbReference>
<dbReference type="InterPro" id="IPR035892">
    <property type="entry name" value="C2_domain_sf"/>
</dbReference>
<dbReference type="InterPro" id="IPR011009">
    <property type="entry name" value="Kinase-like_dom_sf"/>
</dbReference>
<dbReference type="InterPro" id="IPR000403">
    <property type="entry name" value="PI3/4_kinase_cat_dom"/>
</dbReference>
<dbReference type="InterPro" id="IPR036940">
    <property type="entry name" value="PI3/4_kinase_cat_sf"/>
</dbReference>
<dbReference type="InterPro" id="IPR018936">
    <property type="entry name" value="PI3/4_kinase_CS"/>
</dbReference>
<dbReference type="InterPro" id="IPR002420">
    <property type="entry name" value="PI3K-type_C2_dom"/>
</dbReference>
<dbReference type="InterPro" id="IPR001263">
    <property type="entry name" value="PI3K_accessory_dom"/>
</dbReference>
<dbReference type="InterPro" id="IPR042236">
    <property type="entry name" value="PI3K_accessory_sf"/>
</dbReference>
<dbReference type="InterPro" id="IPR000341">
    <property type="entry name" value="PI3K_Ras-bd_dom"/>
</dbReference>
<dbReference type="InterPro" id="IPR035448">
    <property type="entry name" value="PI3Kc"/>
</dbReference>
<dbReference type="InterPro" id="IPR015433">
    <property type="entry name" value="PI_Kinase"/>
</dbReference>
<dbReference type="InterPro" id="IPR029071">
    <property type="entry name" value="Ubiquitin-like_domsf"/>
</dbReference>
<dbReference type="PANTHER" id="PTHR10048:SF117">
    <property type="entry name" value="PHOSPHATIDYLINOSITOL 3-KINASE 2"/>
    <property type="match status" value="1"/>
</dbReference>
<dbReference type="PANTHER" id="PTHR10048">
    <property type="entry name" value="PHOSPHATIDYLINOSITOL KINASE"/>
    <property type="match status" value="1"/>
</dbReference>
<dbReference type="Pfam" id="PF00454">
    <property type="entry name" value="PI3_PI4_kinase"/>
    <property type="match status" value="1"/>
</dbReference>
<dbReference type="Pfam" id="PF00792">
    <property type="entry name" value="PI3K_C2"/>
    <property type="match status" value="1"/>
</dbReference>
<dbReference type="Pfam" id="PF00794">
    <property type="entry name" value="PI3K_rbd"/>
    <property type="match status" value="1"/>
</dbReference>
<dbReference type="Pfam" id="PF00613">
    <property type="entry name" value="PI3Ka"/>
    <property type="match status" value="1"/>
</dbReference>
<dbReference type="SMART" id="SM00142">
    <property type="entry name" value="PI3K_C2"/>
    <property type="match status" value="1"/>
</dbReference>
<dbReference type="SMART" id="SM00144">
    <property type="entry name" value="PI3K_rbd"/>
    <property type="match status" value="1"/>
</dbReference>
<dbReference type="SMART" id="SM00145">
    <property type="entry name" value="PI3Ka"/>
    <property type="match status" value="1"/>
</dbReference>
<dbReference type="SMART" id="SM00146">
    <property type="entry name" value="PI3Kc"/>
    <property type="match status" value="1"/>
</dbReference>
<dbReference type="SUPFAM" id="SSF48371">
    <property type="entry name" value="ARM repeat"/>
    <property type="match status" value="1"/>
</dbReference>
<dbReference type="SUPFAM" id="SSF49562">
    <property type="entry name" value="C2 domain (Calcium/lipid-binding domain, CaLB)"/>
    <property type="match status" value="1"/>
</dbReference>
<dbReference type="SUPFAM" id="SSF56112">
    <property type="entry name" value="Protein kinase-like (PK-like)"/>
    <property type="match status" value="1"/>
</dbReference>
<dbReference type="SUPFAM" id="SSF54236">
    <property type="entry name" value="Ubiquitin-like"/>
    <property type="match status" value="1"/>
</dbReference>
<dbReference type="PROSITE" id="PS51547">
    <property type="entry name" value="C2_PI3K"/>
    <property type="match status" value="1"/>
</dbReference>
<dbReference type="PROSITE" id="PS00915">
    <property type="entry name" value="PI3_4_KINASE_1"/>
    <property type="match status" value="1"/>
</dbReference>
<dbReference type="PROSITE" id="PS00916">
    <property type="entry name" value="PI3_4_KINASE_2"/>
    <property type="match status" value="1"/>
</dbReference>
<dbReference type="PROSITE" id="PS50290">
    <property type="entry name" value="PI3_4_KINASE_3"/>
    <property type="match status" value="1"/>
</dbReference>
<dbReference type="PROSITE" id="PS51546">
    <property type="entry name" value="PI3K_RBD"/>
    <property type="match status" value="1"/>
</dbReference>
<dbReference type="PROSITE" id="PS51545">
    <property type="entry name" value="PIK_HELICAL"/>
    <property type="match status" value="1"/>
</dbReference>
<reference key="1">
    <citation type="journal article" date="1995" name="Mol. Cell. Biol.">
        <title>A phosphatidylinositol (PI) kinase gene family in Dictyostelium discoideum: biological roles of putative mammalian p110 and yeast Vps34p PI 3-kinase homologs during growth and development.</title>
        <authorList>
            <person name="Zhou K."/>
            <person name="Takegawa K."/>
            <person name="Emr S.D."/>
            <person name="Firtel R.A."/>
        </authorList>
    </citation>
    <scope>NUCLEOTIDE SEQUENCE [MRNA]</scope>
    <source>
        <strain>AX3</strain>
    </source>
</reference>
<reference key="2">
    <citation type="journal article" date="2005" name="Nature">
        <title>The genome of the social amoeba Dictyostelium discoideum.</title>
        <authorList>
            <person name="Eichinger L."/>
            <person name="Pachebat J.A."/>
            <person name="Gloeckner G."/>
            <person name="Rajandream M.A."/>
            <person name="Sucgang R."/>
            <person name="Berriman M."/>
            <person name="Song J."/>
            <person name="Olsen R."/>
            <person name="Szafranski K."/>
            <person name="Xu Q."/>
            <person name="Tunggal B."/>
            <person name="Kummerfeld S."/>
            <person name="Madera M."/>
            <person name="Konfortov B.A."/>
            <person name="Rivero F."/>
            <person name="Bankier A.T."/>
            <person name="Lehmann R."/>
            <person name="Hamlin N."/>
            <person name="Davies R."/>
            <person name="Gaudet P."/>
            <person name="Fey P."/>
            <person name="Pilcher K."/>
            <person name="Chen G."/>
            <person name="Saunders D."/>
            <person name="Sodergren E.J."/>
            <person name="Davis P."/>
            <person name="Kerhornou A."/>
            <person name="Nie X."/>
            <person name="Hall N."/>
            <person name="Anjard C."/>
            <person name="Hemphill L."/>
            <person name="Bason N."/>
            <person name="Farbrother P."/>
            <person name="Desany B."/>
            <person name="Just E."/>
            <person name="Morio T."/>
            <person name="Rost R."/>
            <person name="Churcher C.M."/>
            <person name="Cooper J."/>
            <person name="Haydock S."/>
            <person name="van Driessche N."/>
            <person name="Cronin A."/>
            <person name="Goodhead I."/>
            <person name="Muzny D.M."/>
            <person name="Mourier T."/>
            <person name="Pain A."/>
            <person name="Lu M."/>
            <person name="Harper D."/>
            <person name="Lindsay R."/>
            <person name="Hauser H."/>
            <person name="James K.D."/>
            <person name="Quiles M."/>
            <person name="Madan Babu M."/>
            <person name="Saito T."/>
            <person name="Buchrieser C."/>
            <person name="Wardroper A."/>
            <person name="Felder M."/>
            <person name="Thangavelu M."/>
            <person name="Johnson D."/>
            <person name="Knights A."/>
            <person name="Loulseged H."/>
            <person name="Mungall K.L."/>
            <person name="Oliver K."/>
            <person name="Price C."/>
            <person name="Quail M.A."/>
            <person name="Urushihara H."/>
            <person name="Hernandez J."/>
            <person name="Rabbinowitsch E."/>
            <person name="Steffen D."/>
            <person name="Sanders M."/>
            <person name="Ma J."/>
            <person name="Kohara Y."/>
            <person name="Sharp S."/>
            <person name="Simmonds M.N."/>
            <person name="Spiegler S."/>
            <person name="Tivey A."/>
            <person name="Sugano S."/>
            <person name="White B."/>
            <person name="Walker D."/>
            <person name="Woodward J.R."/>
            <person name="Winckler T."/>
            <person name="Tanaka Y."/>
            <person name="Shaulsky G."/>
            <person name="Schleicher M."/>
            <person name="Weinstock G.M."/>
            <person name="Rosenthal A."/>
            <person name="Cox E.C."/>
            <person name="Chisholm R.L."/>
            <person name="Gibbs R.A."/>
            <person name="Loomis W.F."/>
            <person name="Platzer M."/>
            <person name="Kay R.R."/>
            <person name="Williams J.G."/>
            <person name="Dear P.H."/>
            <person name="Noegel A.A."/>
            <person name="Barrell B.G."/>
            <person name="Kuspa A."/>
        </authorList>
    </citation>
    <scope>NUCLEOTIDE SEQUENCE [LARGE SCALE GENOMIC DNA]</scope>
    <source>
        <strain>AX4</strain>
    </source>
</reference>